<sequence length="144" mass="15810">MNFKYIVAVSFLIASGYARSEENDVQSLSQREVLEEESLREIRGIGGALLSAGKSALKGLAKGLVEHFANGKRTAEDHEVMKRLKAVMRDLDSLDHPEEASERETRGFNQEEIANLFTKKEKRILGPVLSLVGSALGGLIKKIG</sequence>
<keyword id="KW-0027">Amidation</keyword>
<keyword id="KW-0878">Amphibian defense peptide</keyword>
<keyword id="KW-0044">Antibiotic</keyword>
<keyword id="KW-0929">Antimicrobial</keyword>
<keyword id="KW-0165">Cleavage on pair of basic residues</keyword>
<keyword id="KW-0204">Cytolysis</keyword>
<keyword id="KW-0295">Fungicide</keyword>
<keyword id="KW-0354">Hemolysis</keyword>
<keyword id="KW-0964">Secreted</keyword>
<keyword id="KW-0732">Signal</keyword>
<protein>
    <recommendedName>
        <fullName>Maximins z/Hv</fullName>
    </recommendedName>
    <component>
        <recommendedName>
            <fullName>Maximin-z</fullName>
        </recommendedName>
    </component>
    <component>
        <recommendedName>
            <fullName>Maximin-Hv</fullName>
        </recommendedName>
    </component>
</protein>
<organism>
    <name type="scientific">Bombina maxima</name>
    <name type="common">Giant fire-bellied toad</name>
    <name type="synonym">Chinese red belly toad</name>
    <dbReference type="NCBI Taxonomy" id="161274"/>
    <lineage>
        <taxon>Eukaryota</taxon>
        <taxon>Metazoa</taxon>
        <taxon>Chordata</taxon>
        <taxon>Craniata</taxon>
        <taxon>Vertebrata</taxon>
        <taxon>Euteleostomi</taxon>
        <taxon>Amphibia</taxon>
        <taxon>Batrachia</taxon>
        <taxon>Anura</taxon>
        <taxon>Bombinatoridae</taxon>
        <taxon>Bombina</taxon>
    </lineage>
</organism>
<accession>Q58T90</accession>
<proteinExistence type="evidence at transcript level"/>
<feature type="signal peptide" evidence="2">
    <location>
        <begin position="1"/>
        <end position="18"/>
    </location>
</feature>
<feature type="propeptide" id="PRO_0000003256" evidence="1">
    <location>
        <begin position="19"/>
        <end position="43"/>
    </location>
</feature>
<feature type="peptide" id="PRO_0000003257" description="Maximin-z">
    <location>
        <begin position="44"/>
        <end position="70"/>
    </location>
</feature>
<feature type="propeptide" id="PRO_0000003258" evidence="1">
    <location>
        <begin position="74"/>
        <end position="123"/>
    </location>
</feature>
<feature type="peptide" id="PRO_0000003259" description="Maximin-Hv">
    <location>
        <begin position="124"/>
        <end position="143"/>
    </location>
</feature>
<feature type="modified residue" description="Asparagine amide" evidence="3">
    <location>
        <position position="70"/>
    </location>
</feature>
<feature type="modified residue" description="Isoleucine amide" evidence="3">
    <location>
        <position position="143"/>
    </location>
</feature>
<name>MZHV_BOMMX</name>
<reference key="1">
    <citation type="journal article" date="2005" name="Eur. J. Immunol.">
        <title>Variety of antimicrobial peptides in the Bombina maxima toad and evidence of their rapid diversification.</title>
        <authorList>
            <person name="Lee W.-H."/>
            <person name="Li Y."/>
            <person name="Lai R."/>
            <person name="Li S."/>
            <person name="Zhang Y."/>
            <person name="Wang W."/>
        </authorList>
    </citation>
    <scope>NUCLEOTIDE SEQUENCE [GENOMIC DNA]</scope>
    <source>
        <tissue>Liver</tissue>
    </source>
</reference>
<evidence type="ECO:0000250" key="1"/>
<evidence type="ECO:0000255" key="2"/>
<evidence type="ECO:0000305" key="3"/>
<comment type="function">
    <text evidence="1">Maximin-z shows antimicrobial activity against bacteria and against the fungus C.albicans. It has little hemolytic activity (By similarity).</text>
</comment>
<comment type="function">
    <text evidence="1">Maximin-Hv shows antimicrobial activity against bacteria and against the fungus C.albicans. Shows strong hemolytic activity (By similarity).</text>
</comment>
<comment type="subcellular location">
    <subcellularLocation>
        <location>Secreted</location>
    </subcellularLocation>
</comment>
<comment type="tissue specificity">
    <text>Expressed by the skin glands.</text>
</comment>
<comment type="similarity">
    <text evidence="3">Belongs to the bombinin family.</text>
</comment>
<dbReference type="EMBL" id="AY847754">
    <property type="protein sequence ID" value="AAX50248.1"/>
    <property type="molecule type" value="Genomic_DNA"/>
</dbReference>
<dbReference type="SMR" id="Q58T90"/>
<dbReference type="GO" id="GO:0005576">
    <property type="term" value="C:extracellular region"/>
    <property type="evidence" value="ECO:0007669"/>
    <property type="project" value="UniProtKB-SubCell"/>
</dbReference>
<dbReference type="GO" id="GO:0042742">
    <property type="term" value="P:defense response to bacterium"/>
    <property type="evidence" value="ECO:0007669"/>
    <property type="project" value="UniProtKB-KW"/>
</dbReference>
<dbReference type="GO" id="GO:0050832">
    <property type="term" value="P:defense response to fungus"/>
    <property type="evidence" value="ECO:0007669"/>
    <property type="project" value="UniProtKB-KW"/>
</dbReference>
<dbReference type="GO" id="GO:0031640">
    <property type="term" value="P:killing of cells of another organism"/>
    <property type="evidence" value="ECO:0007669"/>
    <property type="project" value="UniProtKB-KW"/>
</dbReference>
<dbReference type="InterPro" id="IPR007962">
    <property type="entry name" value="Bombinin"/>
</dbReference>
<dbReference type="Pfam" id="PF05298">
    <property type="entry name" value="Bombinin"/>
    <property type="match status" value="1"/>
</dbReference>